<comment type="function">
    <text evidence="1">Cell division inhibitor that blocks the formation of polar Z ring septums. Rapidly oscillates between the poles of the cell to destabilize FtsZ filaments that have formed before they mature into polar Z rings. Prevents FtsZ polymerization.</text>
</comment>
<comment type="subunit">
    <text evidence="1">Interacts with MinD and FtsZ.</text>
</comment>
<comment type="similarity">
    <text evidence="1">Belongs to the MinC family.</text>
</comment>
<accession>A1JRB5</accession>
<gene>
    <name evidence="1" type="primary">minC</name>
    <name type="ordered locus">YE2371</name>
</gene>
<keyword id="KW-0131">Cell cycle</keyword>
<keyword id="KW-0132">Cell division</keyword>
<keyword id="KW-0717">Septation</keyword>
<proteinExistence type="inferred from homology"/>
<name>MINC_YERE8</name>
<organism>
    <name type="scientific">Yersinia enterocolitica serotype O:8 / biotype 1B (strain NCTC 13174 / 8081)</name>
    <dbReference type="NCBI Taxonomy" id="393305"/>
    <lineage>
        <taxon>Bacteria</taxon>
        <taxon>Pseudomonadati</taxon>
        <taxon>Pseudomonadota</taxon>
        <taxon>Gammaproteobacteria</taxon>
        <taxon>Enterobacterales</taxon>
        <taxon>Yersiniaceae</taxon>
        <taxon>Yersinia</taxon>
    </lineage>
</organism>
<evidence type="ECO:0000255" key="1">
    <source>
        <dbReference type="HAMAP-Rule" id="MF_00267"/>
    </source>
</evidence>
<sequence length="228" mass="24453">MSQSPIELKGSSFTLSVIHLHDSRPEVIRQALQEKVDQAPAFLKNAPVVINVATLPNGANWKDLQQAVTSAGLRIVGISGCQDERQKRAIARAGLPLLSEGKGQKMAPEPVVSPPENVPTKTRIINTPVRSGQQIYARNCDLIVISSVSAGAELIADGNIHIYGMMRGRALAGASGDAQCQIFCTHLGAELVSIAGQYWLSDQIPSDYFGQAARLHLLDNALTIQPLN</sequence>
<dbReference type="EMBL" id="AM286415">
    <property type="protein sequence ID" value="CAL12423.1"/>
    <property type="molecule type" value="Genomic_DNA"/>
</dbReference>
<dbReference type="RefSeq" id="WP_005169220.1">
    <property type="nucleotide sequence ID" value="NC_008800.1"/>
</dbReference>
<dbReference type="RefSeq" id="YP_001006590.1">
    <property type="nucleotide sequence ID" value="NC_008800.1"/>
</dbReference>
<dbReference type="SMR" id="A1JRB5"/>
<dbReference type="KEGG" id="yen:YE2371"/>
<dbReference type="PATRIC" id="fig|393305.7.peg.2525"/>
<dbReference type="eggNOG" id="COG0850">
    <property type="taxonomic scope" value="Bacteria"/>
</dbReference>
<dbReference type="HOGENOM" id="CLU_067812_0_1_6"/>
<dbReference type="OrthoDB" id="9794530at2"/>
<dbReference type="Proteomes" id="UP000000642">
    <property type="component" value="Chromosome"/>
</dbReference>
<dbReference type="GO" id="GO:0000902">
    <property type="term" value="P:cell morphogenesis"/>
    <property type="evidence" value="ECO:0007669"/>
    <property type="project" value="InterPro"/>
</dbReference>
<dbReference type="GO" id="GO:0000917">
    <property type="term" value="P:division septum assembly"/>
    <property type="evidence" value="ECO:0007669"/>
    <property type="project" value="UniProtKB-KW"/>
</dbReference>
<dbReference type="GO" id="GO:0051302">
    <property type="term" value="P:regulation of cell division"/>
    <property type="evidence" value="ECO:0007669"/>
    <property type="project" value="InterPro"/>
</dbReference>
<dbReference type="GO" id="GO:1901891">
    <property type="term" value="P:regulation of cell septum assembly"/>
    <property type="evidence" value="ECO:0007669"/>
    <property type="project" value="InterPro"/>
</dbReference>
<dbReference type="FunFam" id="2.160.20.70:FF:000002">
    <property type="entry name" value="Probable septum site-determining protein MinC"/>
    <property type="match status" value="1"/>
</dbReference>
<dbReference type="Gene3D" id="2.160.20.70">
    <property type="match status" value="1"/>
</dbReference>
<dbReference type="Gene3D" id="3.30.70.260">
    <property type="match status" value="1"/>
</dbReference>
<dbReference type="HAMAP" id="MF_00267">
    <property type="entry name" value="MinC"/>
    <property type="match status" value="1"/>
</dbReference>
<dbReference type="InterPro" id="IPR016098">
    <property type="entry name" value="CAP/MinC_C"/>
</dbReference>
<dbReference type="InterPro" id="IPR013033">
    <property type="entry name" value="MinC"/>
</dbReference>
<dbReference type="InterPro" id="IPR036145">
    <property type="entry name" value="MinC_C_sf"/>
</dbReference>
<dbReference type="InterPro" id="IPR007874">
    <property type="entry name" value="MinC_N"/>
</dbReference>
<dbReference type="InterPro" id="IPR005526">
    <property type="entry name" value="Septum_form_inhib_MinC_C"/>
</dbReference>
<dbReference type="NCBIfam" id="TIGR01222">
    <property type="entry name" value="minC"/>
    <property type="match status" value="1"/>
</dbReference>
<dbReference type="PANTHER" id="PTHR34108">
    <property type="entry name" value="SEPTUM SITE-DETERMINING PROTEIN MINC"/>
    <property type="match status" value="1"/>
</dbReference>
<dbReference type="PANTHER" id="PTHR34108:SF1">
    <property type="entry name" value="SEPTUM SITE-DETERMINING PROTEIN MINC"/>
    <property type="match status" value="1"/>
</dbReference>
<dbReference type="Pfam" id="PF03775">
    <property type="entry name" value="MinC_C"/>
    <property type="match status" value="1"/>
</dbReference>
<dbReference type="Pfam" id="PF05209">
    <property type="entry name" value="MinC_N"/>
    <property type="match status" value="1"/>
</dbReference>
<dbReference type="SUPFAM" id="SSF63848">
    <property type="entry name" value="Cell-division inhibitor MinC, C-terminal domain"/>
    <property type="match status" value="1"/>
</dbReference>
<protein>
    <recommendedName>
        <fullName evidence="1">Probable septum site-determining protein MinC</fullName>
    </recommendedName>
</protein>
<feature type="chain" id="PRO_1000047877" description="Probable septum site-determining protein MinC">
    <location>
        <begin position="1"/>
        <end position="228"/>
    </location>
</feature>
<reference key="1">
    <citation type="journal article" date="2006" name="PLoS Genet.">
        <title>The complete genome sequence and comparative genome analysis of the high pathogenicity Yersinia enterocolitica strain 8081.</title>
        <authorList>
            <person name="Thomson N.R."/>
            <person name="Howard S."/>
            <person name="Wren B.W."/>
            <person name="Holden M.T.G."/>
            <person name="Crossman L."/>
            <person name="Challis G.L."/>
            <person name="Churcher C."/>
            <person name="Mungall K."/>
            <person name="Brooks K."/>
            <person name="Chillingworth T."/>
            <person name="Feltwell T."/>
            <person name="Abdellah Z."/>
            <person name="Hauser H."/>
            <person name="Jagels K."/>
            <person name="Maddison M."/>
            <person name="Moule S."/>
            <person name="Sanders M."/>
            <person name="Whitehead S."/>
            <person name="Quail M.A."/>
            <person name="Dougan G."/>
            <person name="Parkhill J."/>
            <person name="Prentice M.B."/>
        </authorList>
    </citation>
    <scope>NUCLEOTIDE SEQUENCE [LARGE SCALE GENOMIC DNA]</scope>
    <source>
        <strain>NCTC 13174 / 8081</strain>
    </source>
</reference>